<keyword id="KW-1015">Disulfide bond</keyword>
<keyword id="KW-0872">Ion channel impairing toxin</keyword>
<keyword id="KW-0632">Potassium channel impairing toxin</keyword>
<keyword id="KW-0646">Protease inhibitor</keyword>
<keyword id="KW-0677">Repeat</keyword>
<keyword id="KW-0964">Secreted</keyword>
<keyword id="KW-0722">Serine protease inhibitor</keyword>
<keyword id="KW-0732">Signal</keyword>
<keyword id="KW-0800">Toxin</keyword>
<keyword id="KW-1220">Voltage-gated potassium channel impairing toxin</keyword>
<accession>A0A1D0BND9</accession>
<proteinExistence type="evidence at transcript level"/>
<name>TD1A_HADIN</name>
<dbReference type="EMBL" id="HACE01000093">
    <property type="protein sequence ID" value="CDZ18877.1"/>
    <property type="molecule type" value="mRNA"/>
</dbReference>
<dbReference type="SMR" id="A0A1D0BND9"/>
<dbReference type="GO" id="GO:0005615">
    <property type="term" value="C:extracellular space"/>
    <property type="evidence" value="ECO:0007669"/>
    <property type="project" value="TreeGrafter"/>
</dbReference>
<dbReference type="GO" id="GO:0015459">
    <property type="term" value="F:potassium channel regulator activity"/>
    <property type="evidence" value="ECO:0007669"/>
    <property type="project" value="UniProtKB-KW"/>
</dbReference>
<dbReference type="GO" id="GO:0004867">
    <property type="term" value="F:serine-type endopeptidase inhibitor activity"/>
    <property type="evidence" value="ECO:0007669"/>
    <property type="project" value="UniProtKB-KW"/>
</dbReference>
<dbReference type="GO" id="GO:0090729">
    <property type="term" value="F:toxin activity"/>
    <property type="evidence" value="ECO:0007669"/>
    <property type="project" value="UniProtKB-KW"/>
</dbReference>
<dbReference type="GO" id="GO:0044562">
    <property type="term" value="P:envenomation resulting in negative regulation of voltage-gated potassium channel activity in another organism"/>
    <property type="evidence" value="ECO:0007669"/>
    <property type="project" value="UniProtKB-ARBA"/>
</dbReference>
<dbReference type="CDD" id="cd00109">
    <property type="entry name" value="Kunitz-type"/>
    <property type="match status" value="2"/>
</dbReference>
<dbReference type="Gene3D" id="4.10.410.10">
    <property type="entry name" value="Pancreatic trypsin inhibitor Kunitz domain"/>
    <property type="match status" value="2"/>
</dbReference>
<dbReference type="InterPro" id="IPR002223">
    <property type="entry name" value="Kunitz_BPTI"/>
</dbReference>
<dbReference type="InterPro" id="IPR036880">
    <property type="entry name" value="Kunitz_BPTI_sf"/>
</dbReference>
<dbReference type="InterPro" id="IPR020901">
    <property type="entry name" value="Prtase_inh_Kunz-CS"/>
</dbReference>
<dbReference type="InterPro" id="IPR050098">
    <property type="entry name" value="TFPI/VKTCI-like"/>
</dbReference>
<dbReference type="PANTHER" id="PTHR10083:SF374">
    <property type="entry name" value="BPTI_KUNITZ INHIBITOR DOMAIN-CONTAINING PROTEIN"/>
    <property type="match status" value="1"/>
</dbReference>
<dbReference type="PANTHER" id="PTHR10083">
    <property type="entry name" value="KUNITZ-TYPE PROTEASE INHIBITOR-RELATED"/>
    <property type="match status" value="1"/>
</dbReference>
<dbReference type="Pfam" id="PF00014">
    <property type="entry name" value="Kunitz_BPTI"/>
    <property type="match status" value="2"/>
</dbReference>
<dbReference type="PRINTS" id="PR00759">
    <property type="entry name" value="BASICPTASE"/>
</dbReference>
<dbReference type="SMART" id="SM00131">
    <property type="entry name" value="KU"/>
    <property type="match status" value="2"/>
</dbReference>
<dbReference type="SUPFAM" id="SSF57362">
    <property type="entry name" value="BPTI-like"/>
    <property type="match status" value="2"/>
</dbReference>
<dbReference type="PROSITE" id="PS00280">
    <property type="entry name" value="BPTI_KUNITZ_1"/>
    <property type="match status" value="1"/>
</dbReference>
<dbReference type="PROSITE" id="PS50279">
    <property type="entry name" value="BPTI_KUNITZ_2"/>
    <property type="match status" value="2"/>
</dbReference>
<organism>
    <name type="scientific">Hadronyche infensa</name>
    <name type="common">Fraser island funnel-web spider</name>
    <name type="synonym">Atrax infensus</name>
    <dbReference type="NCBI Taxonomy" id="153481"/>
    <lineage>
        <taxon>Eukaryota</taxon>
        <taxon>Metazoa</taxon>
        <taxon>Ecdysozoa</taxon>
        <taxon>Arthropoda</taxon>
        <taxon>Chelicerata</taxon>
        <taxon>Arachnida</taxon>
        <taxon>Araneae</taxon>
        <taxon>Mygalomorphae</taxon>
        <taxon>Hexathelidae</taxon>
        <taxon>Hadronyche</taxon>
    </lineage>
</organism>
<sequence>MEMSLRVALFFAFWVCLTTGSLNEICYQEKVVGNCGSQLYPYYFNSQSGKCERFMYTGCGKNDNNFGYLFECERTCPGDLDLGDVCSLEPEGGHCRAYFIKYFFNATSGMCEKFVYGGCGGNV</sequence>
<protein>
    <recommendedName>
        <fullName evidence="4">U13-hexatoxin-Hi1a</fullName>
        <shortName evidence="4">U13-HXTX-Hi1a</shortName>
    </recommendedName>
    <alternativeName>
        <fullName evidence="4">SF18 peptide</fullName>
    </alternativeName>
</protein>
<evidence type="ECO:0000250" key="1">
    <source>
        <dbReference type="UniProtKB" id="P68425"/>
    </source>
</evidence>
<evidence type="ECO:0000255" key="2"/>
<evidence type="ECO:0000255" key="3">
    <source>
        <dbReference type="PROSITE-ProRule" id="PRU00031"/>
    </source>
</evidence>
<evidence type="ECO:0000303" key="4">
    <source>
    </source>
</evidence>
<evidence type="ECO:0000305" key="5"/>
<evidence type="ECO:0000305" key="6">
    <source>
    </source>
</evidence>
<evidence type="ECO:0000312" key="7">
    <source>
        <dbReference type="EMBL" id="CDZ18877.1"/>
    </source>
</evidence>
<feature type="signal peptide" evidence="2">
    <location>
        <begin position="1"/>
        <end position="20"/>
    </location>
</feature>
<feature type="chain" id="PRO_5008897005" description="U13-hexatoxin-Hi1a" evidence="6">
    <location>
        <begin position="21"/>
        <end position="123"/>
    </location>
</feature>
<feature type="domain" description="BPTI/Kunitz inhibitor 1" evidence="3">
    <location>
        <begin position="26"/>
        <end position="76"/>
    </location>
</feature>
<feature type="domain" description="BPTI/Kunitz inhibitor 2" evidence="3">
    <location>
        <begin position="86"/>
        <end position="123"/>
    </location>
</feature>
<feature type="disulfide bond" evidence="3">
    <location>
        <begin position="26"/>
        <end position="76"/>
    </location>
</feature>
<feature type="disulfide bond" evidence="3">
    <location>
        <begin position="35"/>
        <end position="59"/>
    </location>
</feature>
<feature type="disulfide bond" evidence="3">
    <location>
        <begin position="51"/>
        <end position="72"/>
    </location>
</feature>
<feature type="disulfide bond" evidence="5">
    <location>
        <begin position="86"/>
        <end position="111"/>
    </location>
</feature>
<feature type="disulfide bond" evidence="3">
    <location>
        <begin position="95"/>
        <end position="119"/>
    </location>
</feature>
<comment type="function">
    <text evidence="1">Dual-function toxin that inhibits both serine proteases and voltage-gated potassium channels (Kv).</text>
</comment>
<comment type="subcellular location">
    <subcellularLocation>
        <location evidence="6">Secreted</location>
    </subcellularLocation>
</comment>
<comment type="tissue specificity">
    <text evidence="6">Expressed by the venom gland.</text>
</comment>
<comment type="similarity">
    <text evidence="5">Belongs to the venom Kunitz-type family. 02 (native) subfamily.</text>
</comment>
<reference key="1">
    <citation type="journal article" date="2020" name="Proc. Natl. Acad. Sci. U.S.A.">
        <title>Structural venomics reveals evolution of a complex venom by duplication and diversification of an ancient peptide-encoding gene.</title>
        <authorList>
            <person name="Pineda S.S."/>
            <person name="Chin Y.K."/>
            <person name="Undheim E.A.B."/>
            <person name="Senff S."/>
            <person name="Mobli M."/>
            <person name="Dauly C."/>
            <person name="Escoubas P."/>
            <person name="Nicholson G.M."/>
            <person name="Kaas Q."/>
            <person name="Guo S."/>
            <person name="Herzig V."/>
            <person name="Mattick J.S."/>
            <person name="King G.F."/>
        </authorList>
    </citation>
    <scope>NUCLEOTIDE SEQUENCE [MRNA]</scope>
    <source>
        <tissue>Venom gland</tissue>
    </source>
</reference>
<reference evidence="7" key="2">
    <citation type="thesis" date="2012" institute="The University of Queensland" country="Australia">
        <title>Probing the chemical diversity of venom from the Australian Funnel-web spider Hadronyche infensa.</title>
        <authorList>
            <person name="Pineda S.S."/>
        </authorList>
    </citation>
    <scope>NUCLEOTIDE SEQUENCE [MRNA]</scope>
    <source>
        <tissue>Venom gland</tissue>
    </source>
</reference>
<reference evidence="7" key="3">
    <citation type="submission" date="2014-07" db="EMBL/GenBank/DDBJ databases">
        <authorList>
            <person name="Zhang J.E."/>
            <person name="Yang H."/>
            <person name="Guo J."/>
            <person name="Deng Z."/>
            <person name="Luo H."/>
            <person name="Luo M."/>
            <person name="Zhao B."/>
        </authorList>
    </citation>
    <scope>NUCLEOTIDE SEQUENCE [MRNA]</scope>
    <source>
        <tissue>Venom gland</tissue>
    </source>
</reference>